<name>ERYC2_SACEN</name>
<feature type="chain" id="PRO_0000418494" description="Cytochrome P450 family protein EryCII">
    <location>
        <begin position="1"/>
        <end position="361"/>
    </location>
</feature>
<feature type="sequence conflict" description="In Ref. 1; AAB84066." evidence="2" ref="1">
    <location>
        <position position="56"/>
    </location>
</feature>
<feature type="helix" evidence="3">
    <location>
        <begin position="3"/>
        <end position="26"/>
    </location>
</feature>
<feature type="helix" evidence="3">
    <location>
        <begin position="29"/>
        <end position="35"/>
    </location>
</feature>
<feature type="helix" evidence="3">
    <location>
        <begin position="42"/>
        <end position="51"/>
    </location>
</feature>
<feature type="strand" evidence="3">
    <location>
        <begin position="53"/>
        <end position="55"/>
    </location>
</feature>
<feature type="strand" evidence="3">
    <location>
        <begin position="57"/>
        <end position="59"/>
    </location>
</feature>
<feature type="strand" evidence="3">
    <location>
        <begin position="61"/>
        <end position="63"/>
    </location>
</feature>
<feature type="helix" evidence="3">
    <location>
        <begin position="66"/>
        <end position="74"/>
    </location>
</feature>
<feature type="strand" evidence="3">
    <location>
        <begin position="76"/>
        <end position="81"/>
    </location>
</feature>
<feature type="helix" evidence="3">
    <location>
        <begin position="87"/>
        <end position="92"/>
    </location>
</feature>
<feature type="helix" evidence="3">
    <location>
        <begin position="96"/>
        <end position="99"/>
    </location>
</feature>
<feature type="helix" evidence="3">
    <location>
        <begin position="101"/>
        <end position="108"/>
    </location>
</feature>
<feature type="helix" evidence="3">
    <location>
        <begin position="121"/>
        <end position="124"/>
    </location>
</feature>
<feature type="helix" evidence="3">
    <location>
        <begin position="139"/>
        <end position="143"/>
    </location>
</feature>
<feature type="helix" evidence="3">
    <location>
        <begin position="145"/>
        <end position="152"/>
    </location>
</feature>
<feature type="helix" evidence="3">
    <location>
        <begin position="162"/>
        <end position="168"/>
    </location>
</feature>
<feature type="helix" evidence="3">
    <location>
        <begin position="171"/>
        <end position="174"/>
    </location>
</feature>
<feature type="helix" evidence="3">
    <location>
        <begin position="181"/>
        <end position="190"/>
    </location>
</feature>
<feature type="helix" evidence="3">
    <location>
        <begin position="196"/>
        <end position="220"/>
    </location>
</feature>
<feature type="helix" evidence="3">
    <location>
        <begin position="222"/>
        <end position="230"/>
    </location>
</feature>
<feature type="helix" evidence="3">
    <location>
        <begin position="236"/>
        <end position="245"/>
    </location>
</feature>
<feature type="strand" evidence="3">
    <location>
        <begin position="250"/>
        <end position="258"/>
    </location>
</feature>
<feature type="strand" evidence="3">
    <location>
        <begin position="260"/>
        <end position="264"/>
    </location>
</feature>
<feature type="strand" evidence="3">
    <location>
        <begin position="272"/>
        <end position="276"/>
    </location>
</feature>
<feature type="helix" evidence="3">
    <location>
        <begin position="277"/>
        <end position="280"/>
    </location>
</feature>
<feature type="turn" evidence="3">
    <location>
        <begin position="284"/>
        <end position="286"/>
    </location>
</feature>
<feature type="strand" evidence="3">
    <location>
        <begin position="287"/>
        <end position="289"/>
    </location>
</feature>
<feature type="helix" evidence="3">
    <location>
        <begin position="314"/>
        <end position="328"/>
    </location>
</feature>
<feature type="turn" evidence="3">
    <location>
        <begin position="329"/>
        <end position="332"/>
    </location>
</feature>
<feature type="strand" evidence="3">
    <location>
        <begin position="349"/>
        <end position="351"/>
    </location>
</feature>
<feature type="strand" evidence="3">
    <location>
        <begin position="354"/>
        <end position="356"/>
    </location>
</feature>
<keyword id="KW-0002">3D-structure</keyword>
<keyword id="KW-0045">Antibiotic biosynthesis</keyword>
<keyword id="KW-1185">Reference proteome</keyword>
<reference key="1">
    <citation type="journal article" date="1997" name="Microbiology">
        <title>Sequencing and mutagenesis of genes from the erythromycin biosynthetic gene cluster of Saccharopolyspora erythraea that are involved in L-mycarose and D-desosamine production.</title>
        <authorList>
            <person name="Summers R.G."/>
            <person name="Donadio S."/>
            <person name="Staver M.J."/>
            <person name="Wendt-Pienkowski E."/>
            <person name="Hutchinson C.R."/>
            <person name="Katz L."/>
        </authorList>
    </citation>
    <scope>NUCLEOTIDE SEQUENCE [GENOMIC DNA]</scope>
    <source>
        <strain>ATCC 11635 / DSM 40517 / JCM 4748 / NBRC 13426 / NCIMB 8594 / NRRL 2338</strain>
    </source>
</reference>
<reference key="2">
    <citation type="journal article" date="1998" name="Mol. Gen. Genet.">
        <title>Targeted gene inactivation for the elucidation of deoxysugar biosynthesis in the erythromycin producer Saccharopolyspora erythraea.</title>
        <authorList>
            <person name="Salah-Bey K."/>
            <person name="Doumith M."/>
            <person name="Michel J.M."/>
            <person name="Haydock S."/>
            <person name="Cortes J."/>
            <person name="Leadlay P.F."/>
            <person name="Raynal M.C."/>
        </authorList>
    </citation>
    <scope>NUCLEOTIDE SEQUENCE [GENOMIC DNA]</scope>
    <source>
        <strain>ATCC 11635 / DSM 40517 / JCM 4748 / NBRC 13426 / NCIMB 8594 / NRRL 2338</strain>
    </source>
</reference>
<reference key="3">
    <citation type="journal article" date="2007" name="Nat. Biotechnol.">
        <title>Complete genome sequence of the erythromycin-producing bacterium Saccharopolyspora erythraea NRRL23338.</title>
        <authorList>
            <person name="Oliynyk M."/>
            <person name="Samborskyy M."/>
            <person name="Lester J.B."/>
            <person name="Mironenko T."/>
            <person name="Scott N."/>
            <person name="Dickens S."/>
            <person name="Haydock S.F."/>
            <person name="Leadlay P.F."/>
        </authorList>
    </citation>
    <scope>NUCLEOTIDE SEQUENCE [LARGE SCALE GENOMIC DNA]</scope>
    <source>
        <strain>ATCC 11635 / DSM 40517 / JCM 4748 / NBRC 13426 / NCIMB 8594 / NRRL 2338</strain>
    </source>
</reference>
<reference key="4">
    <citation type="journal article" date="2012" name="J. Mol. Biol.">
        <title>Structure of the glycosyltransferase EryCIII in complex with its activating P450 homologue EryCII.</title>
        <authorList>
            <person name="Moncrieffe M.C."/>
            <person name="Fernandez M.J."/>
            <person name="Spiteller D."/>
            <person name="Matsumura H."/>
            <person name="Gay N.J."/>
            <person name="Luisi B.F."/>
            <person name="Leadlay P.F."/>
        </authorList>
    </citation>
    <scope>X-RAY CRYSTALLOGRAPHY (3.09 ANGSTROMS) IN COMPLEX WITH ERYCIII</scope>
    <scope>SUBUNIT</scope>
    <scope>FUNCTION</scope>
</reference>
<evidence type="ECO:0000269" key="1">
    <source>
    </source>
</evidence>
<evidence type="ECO:0000305" key="2"/>
<evidence type="ECO:0007829" key="3">
    <source>
        <dbReference type="PDB" id="2YJN"/>
    </source>
</evidence>
<accession>A4F7P2</accession>
<accession>O33934</accession>
<accession>O54225</accession>
<organism>
    <name type="scientific">Saccharopolyspora erythraea (strain ATCC 11635 / DSM 40517 / JCM 4748 / NBRC 13426 / NCIMB 8594 / NRRL 2338)</name>
    <dbReference type="NCBI Taxonomy" id="405948"/>
    <lineage>
        <taxon>Bacteria</taxon>
        <taxon>Bacillati</taxon>
        <taxon>Actinomycetota</taxon>
        <taxon>Actinomycetes</taxon>
        <taxon>Pseudonocardiales</taxon>
        <taxon>Pseudonocardiaceae</taxon>
        <taxon>Saccharopolyspora</taxon>
    </lineage>
</organism>
<protein>
    <recommendedName>
        <fullName>Cytochrome P450 family protein EryCII</fullName>
    </recommendedName>
    <alternativeName>
        <fullName>Erythromycin biosynthesis protein CII</fullName>
    </alternativeName>
</protein>
<dbReference type="EMBL" id="U77454">
    <property type="protein sequence ID" value="AAB84066.1"/>
    <property type="molecule type" value="Genomic_DNA"/>
</dbReference>
<dbReference type="EMBL" id="Y14332">
    <property type="protein sequence ID" value="CAA74711.1"/>
    <property type="molecule type" value="Genomic_DNA"/>
</dbReference>
<dbReference type="EMBL" id="AM420293">
    <property type="protein sequence ID" value="CAM00066.1"/>
    <property type="molecule type" value="Genomic_DNA"/>
</dbReference>
<dbReference type="PIR" id="S14161">
    <property type="entry name" value="S14161"/>
</dbReference>
<dbReference type="RefSeq" id="WP_009950404.1">
    <property type="nucleotide sequence ID" value="NC_009142.1"/>
</dbReference>
<dbReference type="PDB" id="2YJN">
    <property type="method" value="X-ray"/>
    <property type="resolution" value="3.09 A"/>
    <property type="chains" value="B=1-361"/>
</dbReference>
<dbReference type="PDBsum" id="2YJN"/>
<dbReference type="SMR" id="A4F7P2"/>
<dbReference type="STRING" id="405948.SACE_0725"/>
<dbReference type="KEGG" id="sen:SACE_0725"/>
<dbReference type="eggNOG" id="COG2124">
    <property type="taxonomic scope" value="Bacteria"/>
</dbReference>
<dbReference type="HOGENOM" id="CLU_764250_0_0_11"/>
<dbReference type="OrthoDB" id="3687467at2"/>
<dbReference type="BioCyc" id="MetaCyc:MONOMER-18408"/>
<dbReference type="UniPathway" id="UPA00240"/>
<dbReference type="EvolutionaryTrace" id="A4F7P2"/>
<dbReference type="Proteomes" id="UP000006728">
    <property type="component" value="Chromosome"/>
</dbReference>
<dbReference type="GO" id="GO:0020037">
    <property type="term" value="F:heme binding"/>
    <property type="evidence" value="ECO:0007669"/>
    <property type="project" value="InterPro"/>
</dbReference>
<dbReference type="GO" id="GO:0005506">
    <property type="term" value="F:iron ion binding"/>
    <property type="evidence" value="ECO:0007669"/>
    <property type="project" value="InterPro"/>
</dbReference>
<dbReference type="GO" id="GO:0004497">
    <property type="term" value="F:monooxygenase activity"/>
    <property type="evidence" value="ECO:0007669"/>
    <property type="project" value="InterPro"/>
</dbReference>
<dbReference type="GO" id="GO:0016705">
    <property type="term" value="F:oxidoreductase activity, acting on paired donors, with incorporation or reduction of molecular oxygen"/>
    <property type="evidence" value="ECO:0007669"/>
    <property type="project" value="InterPro"/>
</dbReference>
<dbReference type="GO" id="GO:0017000">
    <property type="term" value="P:antibiotic biosynthetic process"/>
    <property type="evidence" value="ECO:0007669"/>
    <property type="project" value="UniProtKB-KW"/>
</dbReference>
<dbReference type="CDD" id="cd11036">
    <property type="entry name" value="AknT-like"/>
    <property type="match status" value="1"/>
</dbReference>
<dbReference type="Gene3D" id="1.10.630.10">
    <property type="entry name" value="Cytochrome P450"/>
    <property type="match status" value="1"/>
</dbReference>
<dbReference type="InterPro" id="IPR001128">
    <property type="entry name" value="Cyt_P450"/>
</dbReference>
<dbReference type="InterPro" id="IPR036396">
    <property type="entry name" value="Cyt_P450_sf"/>
</dbReference>
<dbReference type="PANTHER" id="PTHR46696:SF1">
    <property type="entry name" value="CYTOCHROME P450 YJIB-RELATED"/>
    <property type="match status" value="1"/>
</dbReference>
<dbReference type="PANTHER" id="PTHR46696">
    <property type="entry name" value="P450, PUTATIVE (EUROFUNG)-RELATED"/>
    <property type="match status" value="1"/>
</dbReference>
<dbReference type="Pfam" id="PF00067">
    <property type="entry name" value="p450"/>
    <property type="match status" value="1"/>
</dbReference>
<dbReference type="SUPFAM" id="SSF48264">
    <property type="entry name" value="Cytochrome P450"/>
    <property type="match status" value="1"/>
</dbReference>
<comment type="function">
    <text evidence="1">Involved in the erythromycin biosynthesis pathway. Acts by forming a complex and stabilizing the desosaminyl transferase EryCIII.</text>
</comment>
<comment type="pathway">
    <text>Antibiotic biosynthesis; erythromycin biosynthesis.</text>
</comment>
<comment type="subunit">
    <text evidence="1">Heterotetramer composed of EryCII and EryCIII.</text>
</comment>
<comment type="similarity">
    <text evidence="2">Belongs to the cytochrome P450 family.</text>
</comment>
<comment type="caution">
    <text evidence="2">Although related to the cytochrome P450 family, lacks the heme-binding sites.</text>
</comment>
<sequence length="361" mass="38507">MTTTDRAGLGRQLQMIRGLHWGYGSNGDPYPMLLCGHDDDPQRRYRSMRESGVRRSRTETWVVADHATARQVLDDPAFTRATGRTPEWMRAAGAPPAEWAQPFRDVHAASWEGEVPDVGELAESFAGLLPGAGARLDLVGDFAWQVPVQGMTAVLGAAGVLRGAAWDARVSLDAQLSPQQLAVTEAAVAALPADPALRALFAGAEMTANTVVDAVLAVSAEPGLAERIADDPAAAQRTVAEVLRLHPALHLERRTATAEVRLGEHVIGEGEEVVVVVAAANRDPEVFAEPDRLDVDRPDADRALSAHRGHPGRLEELVTALATAALRAAAKALPGLTPSGPVVRRRRSPVLRGTNRCPVEL</sequence>
<gene>
    <name type="primary">eryCII</name>
    <name type="ordered locus">SACE_0725</name>
</gene>
<proteinExistence type="evidence at protein level"/>